<name>RL29_BREDI</name>
<comment type="similarity">
    <text evidence="1">Belongs to the universal ribosomal protein uL29 family.</text>
</comment>
<proteinExistence type="evidence at protein level"/>
<protein>
    <recommendedName>
        <fullName evidence="1">Large ribosomal subunit protein uL29</fullName>
    </recommendedName>
    <alternativeName>
        <fullName>50S ribosomal protein L29</fullName>
    </alternativeName>
</protein>
<evidence type="ECO:0000305" key="1"/>
<organism>
    <name type="scientific">Brevundimonas diminuta</name>
    <name type="common">Pseudomonas diminuta</name>
    <dbReference type="NCBI Taxonomy" id="293"/>
    <lineage>
        <taxon>Bacteria</taxon>
        <taxon>Pseudomonadati</taxon>
        <taxon>Pseudomonadota</taxon>
        <taxon>Alphaproteobacteria</taxon>
        <taxon>Caulobacterales</taxon>
        <taxon>Caulobacteraceae</taxon>
        <taxon>Brevundimonas</taxon>
    </lineage>
</organism>
<gene>
    <name type="primary">rpmC</name>
</gene>
<reference key="1">
    <citation type="journal article" date="1995" name="Int. J. Syst. Bacteriol.">
        <title>Comparative ribosomal protein sequence analyses of a phylogenetically defined genus, Pseudomonas, and its relatives.</title>
        <authorList>
            <person name="Ochi K."/>
        </authorList>
    </citation>
    <scope>PROTEIN SEQUENCE</scope>
    <source>
        <strain>ATCC 11568 / DSM 7234 / JCM 2788 / NCIB 9393 / NCTC 8545</strain>
    </source>
</reference>
<dbReference type="STRING" id="293.GCA_000988015_00971"/>
<dbReference type="GO" id="GO:1990904">
    <property type="term" value="C:ribonucleoprotein complex"/>
    <property type="evidence" value="ECO:0007669"/>
    <property type="project" value="UniProtKB-KW"/>
</dbReference>
<dbReference type="GO" id="GO:0005840">
    <property type="term" value="C:ribosome"/>
    <property type="evidence" value="ECO:0007669"/>
    <property type="project" value="UniProtKB-KW"/>
</dbReference>
<feature type="chain" id="PRO_0000224000" description="Large ribosomal subunit protein uL29">
    <location>
        <begin position="1"/>
        <end position="21" status="greater than"/>
    </location>
</feature>
<feature type="non-terminal residue">
    <location>
        <position position="21"/>
    </location>
</feature>
<accession>Q9R4P4</accession>
<keyword id="KW-0903">Direct protein sequencing</keyword>
<keyword id="KW-0687">Ribonucleoprotein</keyword>
<keyword id="KW-0689">Ribosomal protein</keyword>
<sequence>TKIADLRSQTVDQLSDXLXKL</sequence>